<evidence type="ECO:0000255" key="1">
    <source>
        <dbReference type="HAMAP-Rule" id="MF_00260"/>
    </source>
</evidence>
<organism>
    <name type="scientific">Lachnospira eligens (strain ATCC 27750 / DSM 3376 / VPI C15-48 / C15-B4)</name>
    <name type="common">Eubacterium eligens</name>
    <dbReference type="NCBI Taxonomy" id="515620"/>
    <lineage>
        <taxon>Bacteria</taxon>
        <taxon>Bacillati</taxon>
        <taxon>Bacillota</taxon>
        <taxon>Clostridia</taxon>
        <taxon>Lachnospirales</taxon>
        <taxon>Lachnospiraceae</taxon>
        <taxon>Lachnospira</taxon>
    </lineage>
</organism>
<reference key="1">
    <citation type="journal article" date="2009" name="Proc. Natl. Acad. Sci. U.S.A.">
        <title>Characterizing a model human gut microbiota composed of members of its two dominant bacterial phyla.</title>
        <authorList>
            <person name="Mahowald M.A."/>
            <person name="Rey F.E."/>
            <person name="Seedorf H."/>
            <person name="Turnbaugh P.J."/>
            <person name="Fulton R.S."/>
            <person name="Wollam A."/>
            <person name="Shah N."/>
            <person name="Wang C."/>
            <person name="Magrini V."/>
            <person name="Wilson R.K."/>
            <person name="Cantarel B.L."/>
            <person name="Coutinho P.M."/>
            <person name="Henrissat B."/>
            <person name="Crock L.W."/>
            <person name="Russell A."/>
            <person name="Verberkmoes N.C."/>
            <person name="Hettich R.L."/>
            <person name="Gordon J.I."/>
        </authorList>
    </citation>
    <scope>NUCLEOTIDE SEQUENCE [LARGE SCALE GENOMIC DNA]</scope>
    <source>
        <strain>ATCC 27750 / DSM 3376 / VPI C15-48 / C15-B4</strain>
    </source>
</reference>
<keyword id="KW-0627">Porphyrin biosynthesis</keyword>
<keyword id="KW-1185">Reference proteome</keyword>
<keyword id="KW-0808">Transferase</keyword>
<accession>C4Z552</accession>
<proteinExistence type="inferred from homology"/>
<feature type="chain" id="PRO_1000204651" description="Porphobilinogen deaminase">
    <location>
        <begin position="1"/>
        <end position="295"/>
    </location>
</feature>
<feature type="modified residue" description="S-(dipyrrolylmethanemethyl)cysteine" evidence="1">
    <location>
        <position position="241"/>
    </location>
</feature>
<gene>
    <name evidence="1" type="primary">hemC</name>
    <name type="ordered locus">EUBELI_00748</name>
</gene>
<name>HEM3_LACE2</name>
<comment type="function">
    <text evidence="1">Tetrapolymerization of the monopyrrole PBG into the hydroxymethylbilane pre-uroporphyrinogen in several discrete steps.</text>
</comment>
<comment type="catalytic activity">
    <reaction evidence="1">
        <text>4 porphobilinogen + H2O = hydroxymethylbilane + 4 NH4(+)</text>
        <dbReference type="Rhea" id="RHEA:13185"/>
        <dbReference type="ChEBI" id="CHEBI:15377"/>
        <dbReference type="ChEBI" id="CHEBI:28938"/>
        <dbReference type="ChEBI" id="CHEBI:57845"/>
        <dbReference type="ChEBI" id="CHEBI:58126"/>
        <dbReference type="EC" id="2.5.1.61"/>
    </reaction>
</comment>
<comment type="cofactor">
    <cofactor evidence="1">
        <name>dipyrromethane</name>
        <dbReference type="ChEBI" id="CHEBI:60342"/>
    </cofactor>
    <text evidence="1">Binds 1 dipyrromethane group covalently.</text>
</comment>
<comment type="pathway">
    <text evidence="1">Porphyrin-containing compound metabolism; protoporphyrin-IX biosynthesis; coproporphyrinogen-III from 5-aminolevulinate: step 2/4.</text>
</comment>
<comment type="subunit">
    <text evidence="1">Monomer.</text>
</comment>
<comment type="miscellaneous">
    <text evidence="1">The porphobilinogen subunits are added to the dipyrromethane group.</text>
</comment>
<comment type="similarity">
    <text evidence="1">Belongs to the HMBS family.</text>
</comment>
<sequence>MHYRIGTRGSKLALVQSEYVKRRMEEAYPEDTFELVIIKTTGDKVTDKPLAAIGTKGFFVKEIEEALLSGSIDMAVHSMKDMPAECAAGLTFAKAWKREDCRDVLILKTAGSFSELPSGAVIGTGSLRRACQLAMLRPDIQFTAIRGNVDTRINKLMDDSYGLDGIVLAAAGLNRLGRSSEITEYLDPEVVIPAPAQGVLAIETAEVNTELLDKINALSDDNSDREAVAERTFLRLTGGGCHAPVGAHCVTKDNGDLRMVVLFGNDDCSRILRIEVTGTDSEAVGHEAARMLGLE</sequence>
<protein>
    <recommendedName>
        <fullName evidence="1">Porphobilinogen deaminase</fullName>
        <shortName evidence="1">PBG</shortName>
        <ecNumber evidence="1">2.5.1.61</ecNumber>
    </recommendedName>
    <alternativeName>
        <fullName evidence="1">Hydroxymethylbilane synthase</fullName>
        <shortName evidence="1">HMBS</shortName>
    </alternativeName>
    <alternativeName>
        <fullName evidence="1">Pre-uroporphyrinogen synthase</fullName>
    </alternativeName>
</protein>
<dbReference type="EC" id="2.5.1.61" evidence="1"/>
<dbReference type="EMBL" id="CP001104">
    <property type="protein sequence ID" value="ACR71756.1"/>
    <property type="molecule type" value="Genomic_DNA"/>
</dbReference>
<dbReference type="RefSeq" id="WP_012738992.1">
    <property type="nucleotide sequence ID" value="NC_012778.1"/>
</dbReference>
<dbReference type="SMR" id="C4Z552"/>
<dbReference type="STRING" id="515620.EUBELI_00748"/>
<dbReference type="GeneID" id="41355491"/>
<dbReference type="KEGG" id="eel:EUBELI_00748"/>
<dbReference type="eggNOG" id="COG0181">
    <property type="taxonomic scope" value="Bacteria"/>
</dbReference>
<dbReference type="HOGENOM" id="CLU_019704_0_2_9"/>
<dbReference type="UniPathway" id="UPA00251">
    <property type="reaction ID" value="UER00319"/>
</dbReference>
<dbReference type="Proteomes" id="UP000001476">
    <property type="component" value="Chromosome"/>
</dbReference>
<dbReference type="GO" id="GO:0005737">
    <property type="term" value="C:cytoplasm"/>
    <property type="evidence" value="ECO:0007669"/>
    <property type="project" value="TreeGrafter"/>
</dbReference>
<dbReference type="GO" id="GO:0004418">
    <property type="term" value="F:hydroxymethylbilane synthase activity"/>
    <property type="evidence" value="ECO:0007669"/>
    <property type="project" value="UniProtKB-UniRule"/>
</dbReference>
<dbReference type="GO" id="GO:0006782">
    <property type="term" value="P:protoporphyrinogen IX biosynthetic process"/>
    <property type="evidence" value="ECO:0007669"/>
    <property type="project" value="UniProtKB-UniRule"/>
</dbReference>
<dbReference type="FunFam" id="3.40.190.10:FF:000004">
    <property type="entry name" value="Porphobilinogen deaminase"/>
    <property type="match status" value="1"/>
</dbReference>
<dbReference type="FunFam" id="3.40.190.10:FF:000005">
    <property type="entry name" value="Porphobilinogen deaminase"/>
    <property type="match status" value="1"/>
</dbReference>
<dbReference type="Gene3D" id="3.40.190.10">
    <property type="entry name" value="Periplasmic binding protein-like II"/>
    <property type="match status" value="2"/>
</dbReference>
<dbReference type="Gene3D" id="3.30.160.40">
    <property type="entry name" value="Porphobilinogen deaminase, C-terminal domain"/>
    <property type="match status" value="1"/>
</dbReference>
<dbReference type="HAMAP" id="MF_00260">
    <property type="entry name" value="Porphobil_deam"/>
    <property type="match status" value="1"/>
</dbReference>
<dbReference type="InterPro" id="IPR000860">
    <property type="entry name" value="HemC"/>
</dbReference>
<dbReference type="InterPro" id="IPR022417">
    <property type="entry name" value="Porphobilin_deaminase_N"/>
</dbReference>
<dbReference type="InterPro" id="IPR022418">
    <property type="entry name" value="Porphobilinogen_deaminase_C"/>
</dbReference>
<dbReference type="InterPro" id="IPR036803">
    <property type="entry name" value="Porphobilinogen_deaminase_C_sf"/>
</dbReference>
<dbReference type="NCBIfam" id="TIGR00212">
    <property type="entry name" value="hemC"/>
    <property type="match status" value="1"/>
</dbReference>
<dbReference type="PANTHER" id="PTHR11557">
    <property type="entry name" value="PORPHOBILINOGEN DEAMINASE"/>
    <property type="match status" value="1"/>
</dbReference>
<dbReference type="PANTHER" id="PTHR11557:SF0">
    <property type="entry name" value="PORPHOBILINOGEN DEAMINASE"/>
    <property type="match status" value="1"/>
</dbReference>
<dbReference type="Pfam" id="PF01379">
    <property type="entry name" value="Porphobil_deam"/>
    <property type="match status" value="1"/>
</dbReference>
<dbReference type="Pfam" id="PF03900">
    <property type="entry name" value="Porphobil_deamC"/>
    <property type="match status" value="1"/>
</dbReference>
<dbReference type="PIRSF" id="PIRSF001438">
    <property type="entry name" value="4pyrrol_synth_OHMeBilane_synth"/>
    <property type="match status" value="1"/>
</dbReference>
<dbReference type="PRINTS" id="PR00151">
    <property type="entry name" value="PORPHBDMNASE"/>
</dbReference>
<dbReference type="SUPFAM" id="SSF53850">
    <property type="entry name" value="Periplasmic binding protein-like II"/>
    <property type="match status" value="1"/>
</dbReference>
<dbReference type="SUPFAM" id="SSF54782">
    <property type="entry name" value="Porphobilinogen deaminase (hydroxymethylbilane synthase), C-terminal domain"/>
    <property type="match status" value="1"/>
</dbReference>